<organism>
    <name type="scientific">Schistosoma japonicum</name>
    <name type="common">Blood fluke</name>
    <dbReference type="NCBI Taxonomy" id="6182"/>
    <lineage>
        <taxon>Eukaryota</taxon>
        <taxon>Metazoa</taxon>
        <taxon>Spiralia</taxon>
        <taxon>Lophotrochozoa</taxon>
        <taxon>Platyhelminthes</taxon>
        <taxon>Trematoda</taxon>
        <taxon>Digenea</taxon>
        <taxon>Strigeidida</taxon>
        <taxon>Schistosomatoidea</taxon>
        <taxon>Schistosomatidae</taxon>
        <taxon>Schistosoma</taxon>
    </lineage>
</organism>
<sequence>MNTCIQLLILCLVTVINSENSTDHSTENTIENETEDVTKTELLKTIENETENVIETELPETVETEIQTEALNLPQSPEQRYCRSKGQYCSRTYFHRCCGNLVCQLHGFFNGTCVDCLAERKFCIWSSECCSGRCRLFRCRKNTHVKVIHY</sequence>
<keyword id="KW-1015">Disulfide bond</keyword>
<keyword id="KW-0325">Glycoprotein</keyword>
<keyword id="KW-0960">Knottin</keyword>
<keyword id="KW-0964">Secreted</keyword>
<keyword id="KW-0732">Signal</keyword>
<reference key="1">
    <citation type="journal article" date="2006" name="PLoS Pathog.">
        <title>New perspectives on host-parasite interplay by comparative transcriptomic and proteomic analyses of Schistosoma japonicum.</title>
        <authorList>
            <person name="Liu F."/>
            <person name="Lu J."/>
            <person name="Hu W."/>
            <person name="Wang S.-Y."/>
            <person name="Cui S.-J."/>
            <person name="Chi M."/>
            <person name="Yan Q."/>
            <person name="Wang X.-R."/>
            <person name="Song H.-D."/>
            <person name="Xu X.-N."/>
            <person name="Wang J.-J."/>
            <person name="Zhang X.-L."/>
            <person name="Zhang X."/>
            <person name="Wang Z.-Q."/>
            <person name="Xue C.-L."/>
            <person name="Brindley P.J."/>
            <person name="McManus D.P."/>
            <person name="Yang P.-Y."/>
            <person name="Feng Z."/>
            <person name="Chen Z."/>
            <person name="Han Z.-G."/>
        </authorList>
    </citation>
    <scope>NUCLEOTIDE SEQUENCE [LARGE SCALE MRNA]</scope>
</reference>
<name>SJ643_SCHJA</name>
<dbReference type="EMBL" id="AY813773">
    <property type="protein sequence ID" value="AAW25505.1"/>
    <property type="molecule type" value="mRNA"/>
</dbReference>
<dbReference type="SMR" id="Q5DFA1"/>
<dbReference type="GO" id="GO:0005576">
    <property type="term" value="C:extracellular region"/>
    <property type="evidence" value="ECO:0007669"/>
    <property type="project" value="UniProtKB-SubCell"/>
</dbReference>
<dbReference type="InterPro" id="IPR021712">
    <property type="entry name" value="UPF0506"/>
</dbReference>
<dbReference type="Pfam" id="PF11703">
    <property type="entry name" value="UPF0506"/>
    <property type="match status" value="1"/>
</dbReference>
<accession>Q5DFA1</accession>
<feature type="signal peptide" evidence="1">
    <location>
        <begin position="1"/>
        <end position="18"/>
    </location>
</feature>
<feature type="chain" id="PRO_0000311410" description="UPF0506 protein SJCHGC09643">
    <location>
        <begin position="19"/>
        <end position="150"/>
    </location>
</feature>
<feature type="glycosylation site" description="N-linked (GlcNAc...) asparagine" evidence="1">
    <location>
        <position position="20"/>
    </location>
</feature>
<feature type="glycosylation site" description="N-linked (GlcNAc...) asparagine" evidence="1">
    <location>
        <position position="32"/>
    </location>
</feature>
<feature type="glycosylation site" description="N-linked (GlcNAc...) asparagine" evidence="1">
    <location>
        <position position="48"/>
    </location>
</feature>
<feature type="glycosylation site" description="N-linked (GlcNAc...) asparagine" evidence="1">
    <location>
        <position position="110"/>
    </location>
</feature>
<feature type="disulfide bond" evidence="2">
    <location>
        <begin position="116"/>
        <end position="130"/>
    </location>
</feature>
<feature type="disulfide bond" evidence="2">
    <location>
        <begin position="123"/>
        <end position="134"/>
    </location>
</feature>
<feature type="disulfide bond" evidence="2">
    <location>
        <begin position="129"/>
        <end position="139"/>
    </location>
</feature>
<protein>
    <recommendedName>
        <fullName>UPF0506 protein SJCHGC09643</fullName>
    </recommendedName>
</protein>
<evidence type="ECO:0000255" key="1"/>
<evidence type="ECO:0000305" key="2"/>
<proteinExistence type="evidence at transcript level"/>
<gene>
    <name type="ORF">SJCHGC09643</name>
</gene>
<comment type="subcellular location">
    <subcellularLocation>
        <location evidence="2">Secreted</location>
    </subcellularLocation>
</comment>
<comment type="domain">
    <text evidence="2">The presence of a 'disulfide through disulfide knot' structurally defines this protein as a knottin.</text>
</comment>
<comment type="similarity">
    <text evidence="2">Belongs to the UPF0506 family.</text>
</comment>